<gene>
    <name evidence="4" type="primary">Spmap2l</name>
    <name type="synonym">Thegl</name>
</gene>
<keyword id="KW-1185">Reference proteome</keyword>
<keyword id="KW-0677">Repeat</keyword>
<feature type="chain" id="PRO_0000416827" description="Sperm microtubule associated protein 2-like">
    <location>
        <begin position="1"/>
        <end position="459"/>
    </location>
</feature>
<feature type="repeat" description="THEG 1">
    <location>
        <begin position="172"/>
        <end position="190"/>
    </location>
</feature>
<feature type="repeat" description="THEG 2">
    <location>
        <begin position="212"/>
        <end position="231"/>
    </location>
</feature>
<feature type="repeat" description="THEG 3">
    <location>
        <begin position="258"/>
        <end position="277"/>
    </location>
</feature>
<feature type="repeat" description="THEG 4">
    <location>
        <begin position="291"/>
        <end position="310"/>
    </location>
</feature>
<feature type="repeat" description="THEG 5">
    <location>
        <begin position="327"/>
        <end position="346"/>
    </location>
</feature>
<feature type="repeat" description="THEG 6">
    <location>
        <begin position="367"/>
        <end position="386"/>
    </location>
</feature>
<feature type="repeat" description="THEG 7">
    <location>
        <begin position="403"/>
        <end position="422"/>
    </location>
</feature>
<feature type="repeat" description="THEG 8">
    <location>
        <begin position="440"/>
        <end position="459"/>
    </location>
</feature>
<feature type="region of interest" description="Disordered" evidence="2">
    <location>
        <begin position="1"/>
        <end position="138"/>
    </location>
</feature>
<feature type="compositionally biased region" description="Low complexity" evidence="2">
    <location>
        <begin position="21"/>
        <end position="30"/>
    </location>
</feature>
<feature type="compositionally biased region" description="Acidic residues" evidence="2">
    <location>
        <begin position="47"/>
        <end position="63"/>
    </location>
</feature>
<feature type="compositionally biased region" description="Basic and acidic residues" evidence="2">
    <location>
        <begin position="64"/>
        <end position="73"/>
    </location>
</feature>
<feature type="compositionally biased region" description="Polar residues" evidence="2">
    <location>
        <begin position="77"/>
        <end position="87"/>
    </location>
</feature>
<feature type="compositionally biased region" description="Basic and acidic residues" evidence="2">
    <location>
        <begin position="91"/>
        <end position="112"/>
    </location>
</feature>
<feature type="compositionally biased region" description="Basic and acidic residues" evidence="2">
    <location>
        <begin position="127"/>
        <end position="136"/>
    </location>
</feature>
<reference key="1">
    <citation type="journal article" date="2005" name="Science">
        <title>The transcriptional landscape of the mammalian genome.</title>
        <authorList>
            <person name="Carninci P."/>
            <person name="Kasukawa T."/>
            <person name="Katayama S."/>
            <person name="Gough J."/>
            <person name="Frith M.C."/>
            <person name="Maeda N."/>
            <person name="Oyama R."/>
            <person name="Ravasi T."/>
            <person name="Lenhard B."/>
            <person name="Wells C."/>
            <person name="Kodzius R."/>
            <person name="Shimokawa K."/>
            <person name="Bajic V.B."/>
            <person name="Brenner S.E."/>
            <person name="Batalov S."/>
            <person name="Forrest A.R."/>
            <person name="Zavolan M."/>
            <person name="Davis M.J."/>
            <person name="Wilming L.G."/>
            <person name="Aidinis V."/>
            <person name="Allen J.E."/>
            <person name="Ambesi-Impiombato A."/>
            <person name="Apweiler R."/>
            <person name="Aturaliya R.N."/>
            <person name="Bailey T.L."/>
            <person name="Bansal M."/>
            <person name="Baxter L."/>
            <person name="Beisel K.W."/>
            <person name="Bersano T."/>
            <person name="Bono H."/>
            <person name="Chalk A.M."/>
            <person name="Chiu K.P."/>
            <person name="Choudhary V."/>
            <person name="Christoffels A."/>
            <person name="Clutterbuck D.R."/>
            <person name="Crowe M.L."/>
            <person name="Dalla E."/>
            <person name="Dalrymple B.P."/>
            <person name="de Bono B."/>
            <person name="Della Gatta G."/>
            <person name="di Bernardo D."/>
            <person name="Down T."/>
            <person name="Engstrom P."/>
            <person name="Fagiolini M."/>
            <person name="Faulkner G."/>
            <person name="Fletcher C.F."/>
            <person name="Fukushima T."/>
            <person name="Furuno M."/>
            <person name="Futaki S."/>
            <person name="Gariboldi M."/>
            <person name="Georgii-Hemming P."/>
            <person name="Gingeras T.R."/>
            <person name="Gojobori T."/>
            <person name="Green R.E."/>
            <person name="Gustincich S."/>
            <person name="Harbers M."/>
            <person name="Hayashi Y."/>
            <person name="Hensch T.K."/>
            <person name="Hirokawa N."/>
            <person name="Hill D."/>
            <person name="Huminiecki L."/>
            <person name="Iacono M."/>
            <person name="Ikeo K."/>
            <person name="Iwama A."/>
            <person name="Ishikawa T."/>
            <person name="Jakt M."/>
            <person name="Kanapin A."/>
            <person name="Katoh M."/>
            <person name="Kawasawa Y."/>
            <person name="Kelso J."/>
            <person name="Kitamura H."/>
            <person name="Kitano H."/>
            <person name="Kollias G."/>
            <person name="Krishnan S.P."/>
            <person name="Kruger A."/>
            <person name="Kummerfeld S.K."/>
            <person name="Kurochkin I.V."/>
            <person name="Lareau L.F."/>
            <person name="Lazarevic D."/>
            <person name="Lipovich L."/>
            <person name="Liu J."/>
            <person name="Liuni S."/>
            <person name="McWilliam S."/>
            <person name="Madan Babu M."/>
            <person name="Madera M."/>
            <person name="Marchionni L."/>
            <person name="Matsuda H."/>
            <person name="Matsuzawa S."/>
            <person name="Miki H."/>
            <person name="Mignone F."/>
            <person name="Miyake S."/>
            <person name="Morris K."/>
            <person name="Mottagui-Tabar S."/>
            <person name="Mulder N."/>
            <person name="Nakano N."/>
            <person name="Nakauchi H."/>
            <person name="Ng P."/>
            <person name="Nilsson R."/>
            <person name="Nishiguchi S."/>
            <person name="Nishikawa S."/>
            <person name="Nori F."/>
            <person name="Ohara O."/>
            <person name="Okazaki Y."/>
            <person name="Orlando V."/>
            <person name="Pang K.C."/>
            <person name="Pavan W.J."/>
            <person name="Pavesi G."/>
            <person name="Pesole G."/>
            <person name="Petrovsky N."/>
            <person name="Piazza S."/>
            <person name="Reed J."/>
            <person name="Reid J.F."/>
            <person name="Ring B.Z."/>
            <person name="Ringwald M."/>
            <person name="Rost B."/>
            <person name="Ruan Y."/>
            <person name="Salzberg S.L."/>
            <person name="Sandelin A."/>
            <person name="Schneider C."/>
            <person name="Schoenbach C."/>
            <person name="Sekiguchi K."/>
            <person name="Semple C.A."/>
            <person name="Seno S."/>
            <person name="Sessa L."/>
            <person name="Sheng Y."/>
            <person name="Shibata Y."/>
            <person name="Shimada H."/>
            <person name="Shimada K."/>
            <person name="Silva D."/>
            <person name="Sinclair B."/>
            <person name="Sperling S."/>
            <person name="Stupka E."/>
            <person name="Sugiura K."/>
            <person name="Sultana R."/>
            <person name="Takenaka Y."/>
            <person name="Taki K."/>
            <person name="Tammoja K."/>
            <person name="Tan S.L."/>
            <person name="Tang S."/>
            <person name="Taylor M.S."/>
            <person name="Tegner J."/>
            <person name="Teichmann S.A."/>
            <person name="Ueda H.R."/>
            <person name="van Nimwegen E."/>
            <person name="Verardo R."/>
            <person name="Wei C.L."/>
            <person name="Yagi K."/>
            <person name="Yamanishi H."/>
            <person name="Zabarovsky E."/>
            <person name="Zhu S."/>
            <person name="Zimmer A."/>
            <person name="Hide W."/>
            <person name="Bult C."/>
            <person name="Grimmond S.M."/>
            <person name="Teasdale R.D."/>
            <person name="Liu E.T."/>
            <person name="Brusic V."/>
            <person name="Quackenbush J."/>
            <person name="Wahlestedt C."/>
            <person name="Mattick J.S."/>
            <person name="Hume D.A."/>
            <person name="Kai C."/>
            <person name="Sasaki D."/>
            <person name="Tomaru Y."/>
            <person name="Fukuda S."/>
            <person name="Kanamori-Katayama M."/>
            <person name="Suzuki M."/>
            <person name="Aoki J."/>
            <person name="Arakawa T."/>
            <person name="Iida J."/>
            <person name="Imamura K."/>
            <person name="Itoh M."/>
            <person name="Kato T."/>
            <person name="Kawaji H."/>
            <person name="Kawagashira N."/>
            <person name="Kawashima T."/>
            <person name="Kojima M."/>
            <person name="Kondo S."/>
            <person name="Konno H."/>
            <person name="Nakano K."/>
            <person name="Ninomiya N."/>
            <person name="Nishio T."/>
            <person name="Okada M."/>
            <person name="Plessy C."/>
            <person name="Shibata K."/>
            <person name="Shiraki T."/>
            <person name="Suzuki S."/>
            <person name="Tagami M."/>
            <person name="Waki K."/>
            <person name="Watahiki A."/>
            <person name="Okamura-Oho Y."/>
            <person name="Suzuki H."/>
            <person name="Kawai J."/>
            <person name="Hayashizaki Y."/>
        </authorList>
    </citation>
    <scope>NUCLEOTIDE SEQUENCE [LARGE SCALE MRNA]</scope>
    <source>
        <strain>C57BL/6J</strain>
        <tissue>Testis</tissue>
    </source>
</reference>
<reference key="2">
    <citation type="journal article" date="2009" name="PLoS Biol.">
        <title>Lineage-specific biology revealed by a finished genome assembly of the mouse.</title>
        <authorList>
            <person name="Church D.M."/>
            <person name="Goodstadt L."/>
            <person name="Hillier L.W."/>
            <person name="Zody M.C."/>
            <person name="Goldstein S."/>
            <person name="She X."/>
            <person name="Bult C.J."/>
            <person name="Agarwala R."/>
            <person name="Cherry J.L."/>
            <person name="DiCuccio M."/>
            <person name="Hlavina W."/>
            <person name="Kapustin Y."/>
            <person name="Meric P."/>
            <person name="Maglott D."/>
            <person name="Birtle Z."/>
            <person name="Marques A.C."/>
            <person name="Graves T."/>
            <person name="Zhou S."/>
            <person name="Teague B."/>
            <person name="Potamousis K."/>
            <person name="Churas C."/>
            <person name="Place M."/>
            <person name="Herschleb J."/>
            <person name="Runnheim R."/>
            <person name="Forrest D."/>
            <person name="Amos-Landgraf J."/>
            <person name="Schwartz D.C."/>
            <person name="Cheng Z."/>
            <person name="Lindblad-Toh K."/>
            <person name="Eichler E.E."/>
            <person name="Ponting C.P."/>
        </authorList>
    </citation>
    <scope>NUCLEOTIDE SEQUENCE [LARGE SCALE GENOMIC DNA]</scope>
    <source>
        <strain>C57BL/6J</strain>
    </source>
</reference>
<reference key="3">
    <citation type="submission" date="2005-07" db="EMBL/GenBank/DDBJ databases">
        <authorList>
            <person name="Mural R.J."/>
            <person name="Adams M.D."/>
            <person name="Myers E.W."/>
            <person name="Smith H.O."/>
            <person name="Venter J.C."/>
        </authorList>
    </citation>
    <scope>NUCLEOTIDE SEQUENCE [LARGE SCALE GENOMIC DNA]</scope>
</reference>
<reference key="4">
    <citation type="journal article" date="2004" name="Genome Res.">
        <title>The status, quality, and expansion of the NIH full-length cDNA project: the Mammalian Gene Collection (MGC).</title>
        <authorList>
            <consortium name="The MGC Project Team"/>
        </authorList>
    </citation>
    <scope>NUCLEOTIDE SEQUENCE [LARGE SCALE MRNA]</scope>
    <source>
        <tissue>Testis</tissue>
    </source>
</reference>
<reference key="5">
    <citation type="journal article" date="2016" name="Proc. Natl. Acad. Sci. U.S.A.">
        <title>Genome engineering uncovers 54 evolutionarily conserved and testis-enriched genes that are not required for male fertility in mice.</title>
        <authorList>
            <person name="Miyata H."/>
            <person name="Castaneda J.M."/>
            <person name="Fujihara Y."/>
            <person name="Yu Z."/>
            <person name="Archambeault D.R."/>
            <person name="Isotani A."/>
            <person name="Kiyozumi D."/>
            <person name="Kriseman M.L."/>
            <person name="Mashiko D."/>
            <person name="Matsumura T."/>
            <person name="Matzuk R.M."/>
            <person name="Mori M."/>
            <person name="Noda T."/>
            <person name="Oji A."/>
            <person name="Okabe M."/>
            <person name="Prunskaite-Hyyrylainen R."/>
            <person name="Ramirez-Solis R."/>
            <person name="Satouh Y."/>
            <person name="Zhang Q."/>
            <person name="Ikawa M."/>
            <person name="Matzuk M.M."/>
        </authorList>
    </citation>
    <scope>DISRUPTION PHENOTYPE</scope>
</reference>
<accession>Q9DA15</accession>
<organism>
    <name type="scientific">Mus musculus</name>
    <name type="common">Mouse</name>
    <dbReference type="NCBI Taxonomy" id="10090"/>
    <lineage>
        <taxon>Eukaryota</taxon>
        <taxon>Metazoa</taxon>
        <taxon>Chordata</taxon>
        <taxon>Craniata</taxon>
        <taxon>Vertebrata</taxon>
        <taxon>Euteleostomi</taxon>
        <taxon>Mammalia</taxon>
        <taxon>Eutheria</taxon>
        <taxon>Euarchontoglires</taxon>
        <taxon>Glires</taxon>
        <taxon>Rodentia</taxon>
        <taxon>Myomorpha</taxon>
        <taxon>Muroidea</taxon>
        <taxon>Muridae</taxon>
        <taxon>Murinae</taxon>
        <taxon>Mus</taxon>
        <taxon>Mus</taxon>
    </lineage>
</organism>
<sequence length="459" mass="51801">MEEGDFSGSSVRSEVTDGRNTTTTTETRTTSELQPKPLVLRLLEVQNGDEAEAVGEEGQEEDYEGSKTHKSHEVSASFRSHNSSDPPQSRKASDSLRSRKGIEPLEPRKTSDSFRSLMGSDPLQSSERQEDGKDDLFPNAVIMTSPSLIARYLPRLQLASLRAHPVTRDLVKKCFYSRKRVQDLSKPKKQWGTPDRRLFWGNQDPIRPVSEAALKAKLSKRIEDLAQPRLVSRHYVPNRIQYYYSCGRESVIWEISPPALVTRPSKRIQKLAKPNKFKAQSLIKRETVPGTTRYSDPSPRILRLSIAKGTNPSYLPPKTLETKISFSTLSAVATPRIVDLAHPRIKIEGLCYERERSELPIRPVAPAALLANPSKRTIFLAKSKRVHEDYLPIRDARWPVSYAATHSQVSERVQELANPHTRGPANLVYYDPNVFKVKPSALKAHCSDRVKELAEPIVR</sequence>
<protein>
    <recommendedName>
        <fullName evidence="1">Sperm microtubule associated protein 2-like</fullName>
    </recommendedName>
    <alternativeName>
        <fullName>Testicular haploid expressed gene protein-like</fullName>
    </alternativeName>
    <alternativeName>
        <fullName>Theg spermatid-like protein</fullName>
    </alternativeName>
</protein>
<proteinExistence type="evidence at transcript level"/>
<name>SMA2L_MOUSE</name>
<evidence type="ECO:0000250" key="1">
    <source>
        <dbReference type="UniProtKB" id="P0DJG4"/>
    </source>
</evidence>
<evidence type="ECO:0000256" key="2">
    <source>
        <dbReference type="SAM" id="MobiDB-lite"/>
    </source>
</evidence>
<evidence type="ECO:0000269" key="3">
    <source>
    </source>
</evidence>
<evidence type="ECO:0000312" key="4">
    <source>
        <dbReference type="MGI" id="MGI:1919118"/>
    </source>
</evidence>
<dbReference type="EMBL" id="AK006270">
    <property type="protein sequence ID" value="BAB24494.1"/>
    <property type="molecule type" value="mRNA"/>
</dbReference>
<dbReference type="EMBL" id="AC114666">
    <property type="status" value="NOT_ANNOTATED_CDS"/>
    <property type="molecule type" value="Genomic_DNA"/>
</dbReference>
<dbReference type="EMBL" id="AC165975">
    <property type="status" value="NOT_ANNOTATED_CDS"/>
    <property type="molecule type" value="Genomic_DNA"/>
</dbReference>
<dbReference type="EMBL" id="CH466524">
    <property type="protein sequence ID" value="EDL37925.1"/>
    <property type="molecule type" value="Genomic_DNA"/>
</dbReference>
<dbReference type="EMBL" id="BC053422">
    <property type="protein sequence ID" value="AAH53422.1"/>
    <property type="molecule type" value="mRNA"/>
</dbReference>
<dbReference type="CCDS" id="CCDS19369.1"/>
<dbReference type="RefSeq" id="NP_082246.1">
    <property type="nucleotide sequence ID" value="NM_027970.2"/>
</dbReference>
<dbReference type="SMR" id="Q9DA15"/>
<dbReference type="BioGRID" id="214992">
    <property type="interactions" value="1"/>
</dbReference>
<dbReference type="FunCoup" id="Q9DA15">
    <property type="interactions" value="1"/>
</dbReference>
<dbReference type="STRING" id="10090.ENSMUSP00000031161"/>
<dbReference type="iPTMnet" id="Q9DA15"/>
<dbReference type="PhosphoSitePlus" id="Q9DA15"/>
<dbReference type="PaxDb" id="10090-ENSMUSP00000031161"/>
<dbReference type="ProteomicsDB" id="262915"/>
<dbReference type="Antibodypedia" id="76754">
    <property type="antibodies" value="6 antibodies from 4 providers"/>
</dbReference>
<dbReference type="DNASU" id="71868"/>
<dbReference type="Ensembl" id="ENSMUST00000031161.11">
    <property type="protein sequence ID" value="ENSMUSP00000031161.5"/>
    <property type="gene ID" value="ENSMUSG00000029248.15"/>
</dbReference>
<dbReference type="Ensembl" id="ENSMUST00000117880.8">
    <property type="protein sequence ID" value="ENSMUSP00000112814.2"/>
    <property type="gene ID" value="ENSMUSG00000029248.15"/>
</dbReference>
<dbReference type="GeneID" id="71868"/>
<dbReference type="KEGG" id="mmu:71868"/>
<dbReference type="UCSC" id="uc008xvt.1">
    <property type="organism name" value="mouse"/>
</dbReference>
<dbReference type="AGR" id="MGI:1919118"/>
<dbReference type="CTD" id="100506564"/>
<dbReference type="MGI" id="MGI:1919118">
    <property type="gene designation" value="Spmap2l"/>
</dbReference>
<dbReference type="VEuPathDB" id="HostDB:ENSMUSG00000029248"/>
<dbReference type="eggNOG" id="ENOG502S0I9">
    <property type="taxonomic scope" value="Eukaryota"/>
</dbReference>
<dbReference type="GeneTree" id="ENSGT00940000154630"/>
<dbReference type="HOGENOM" id="CLU_587870_0_0_1"/>
<dbReference type="InParanoid" id="Q9DA15"/>
<dbReference type="OMA" id="DRDAHWP"/>
<dbReference type="OrthoDB" id="25466at2759"/>
<dbReference type="PhylomeDB" id="Q9DA15"/>
<dbReference type="TreeFam" id="TF329290"/>
<dbReference type="BioGRID-ORCS" id="71868">
    <property type="hits" value="1 hit in 46 CRISPR screens"/>
</dbReference>
<dbReference type="PRO" id="PR:Q9DA15"/>
<dbReference type="Proteomes" id="UP000000589">
    <property type="component" value="Chromosome 5"/>
</dbReference>
<dbReference type="RNAct" id="Q9DA15">
    <property type="molecule type" value="protein"/>
</dbReference>
<dbReference type="Bgee" id="ENSMUSG00000029248">
    <property type="expression patterns" value="Expressed in seminiferous tubule of testis and 52 other cell types or tissues"/>
</dbReference>
<dbReference type="ExpressionAtlas" id="Q9DA15">
    <property type="expression patterns" value="baseline and differential"/>
</dbReference>
<dbReference type="InterPro" id="IPR042401">
    <property type="entry name" value="SPMAP2-like"/>
</dbReference>
<dbReference type="InterPro" id="IPR006623">
    <property type="entry name" value="THEG"/>
</dbReference>
<dbReference type="PANTHER" id="PTHR15901">
    <property type="entry name" value="TESTICULAR HAPLOID EXPRESSED GENE PROTEIN"/>
    <property type="match status" value="1"/>
</dbReference>
<dbReference type="PANTHER" id="PTHR15901:SF15">
    <property type="entry name" value="TESTICULAR HAPLOID EXPRESSED GENE PROTEIN-LIKE"/>
    <property type="match status" value="1"/>
</dbReference>
<dbReference type="Pfam" id="PF14912">
    <property type="entry name" value="THEG"/>
    <property type="match status" value="4"/>
</dbReference>
<dbReference type="SMART" id="SM00705">
    <property type="entry name" value="THEG"/>
    <property type="match status" value="8"/>
</dbReference>
<comment type="disruption phenotype">
    <text evidence="3">Deficient mice are viable and have normal fertility.</text>
</comment>